<dbReference type="EC" id="3.1.21.2" evidence="1"/>
<dbReference type="EMBL" id="CP000853">
    <property type="protein sequence ID" value="ABW17899.1"/>
    <property type="molecule type" value="Genomic_DNA"/>
</dbReference>
<dbReference type="RefSeq" id="WP_012158214.1">
    <property type="nucleotide sequence ID" value="NC_009922.1"/>
</dbReference>
<dbReference type="SMR" id="A8ML82"/>
<dbReference type="STRING" id="350688.Clos_0337"/>
<dbReference type="KEGG" id="aoe:Clos_0337"/>
<dbReference type="eggNOG" id="COG0648">
    <property type="taxonomic scope" value="Bacteria"/>
</dbReference>
<dbReference type="HOGENOM" id="CLU_025885_4_1_9"/>
<dbReference type="OrthoDB" id="9805666at2"/>
<dbReference type="Proteomes" id="UP000000269">
    <property type="component" value="Chromosome"/>
</dbReference>
<dbReference type="GO" id="GO:0008833">
    <property type="term" value="F:deoxyribonuclease IV (phage-T4-induced) activity"/>
    <property type="evidence" value="ECO:0007669"/>
    <property type="project" value="UniProtKB-UniRule"/>
</dbReference>
<dbReference type="GO" id="GO:0003677">
    <property type="term" value="F:DNA binding"/>
    <property type="evidence" value="ECO:0007669"/>
    <property type="project" value="InterPro"/>
</dbReference>
<dbReference type="GO" id="GO:0003906">
    <property type="term" value="F:DNA-(apurinic or apyrimidinic site) endonuclease activity"/>
    <property type="evidence" value="ECO:0007669"/>
    <property type="project" value="TreeGrafter"/>
</dbReference>
<dbReference type="GO" id="GO:0008081">
    <property type="term" value="F:phosphoric diester hydrolase activity"/>
    <property type="evidence" value="ECO:0007669"/>
    <property type="project" value="TreeGrafter"/>
</dbReference>
<dbReference type="GO" id="GO:0008270">
    <property type="term" value="F:zinc ion binding"/>
    <property type="evidence" value="ECO:0007669"/>
    <property type="project" value="UniProtKB-UniRule"/>
</dbReference>
<dbReference type="GO" id="GO:0006284">
    <property type="term" value="P:base-excision repair"/>
    <property type="evidence" value="ECO:0007669"/>
    <property type="project" value="TreeGrafter"/>
</dbReference>
<dbReference type="CDD" id="cd00019">
    <property type="entry name" value="AP2Ec"/>
    <property type="match status" value="1"/>
</dbReference>
<dbReference type="FunFam" id="3.20.20.150:FF:000001">
    <property type="entry name" value="Probable endonuclease 4"/>
    <property type="match status" value="1"/>
</dbReference>
<dbReference type="Gene3D" id="3.20.20.150">
    <property type="entry name" value="Divalent-metal-dependent TIM barrel enzymes"/>
    <property type="match status" value="1"/>
</dbReference>
<dbReference type="HAMAP" id="MF_00152">
    <property type="entry name" value="Nfo"/>
    <property type="match status" value="1"/>
</dbReference>
<dbReference type="InterPro" id="IPR001719">
    <property type="entry name" value="AP_endonuc_2"/>
</dbReference>
<dbReference type="InterPro" id="IPR018246">
    <property type="entry name" value="AP_endonuc_F2_Zn_BS"/>
</dbReference>
<dbReference type="InterPro" id="IPR036237">
    <property type="entry name" value="Xyl_isomerase-like_sf"/>
</dbReference>
<dbReference type="InterPro" id="IPR013022">
    <property type="entry name" value="Xyl_isomerase-like_TIM-brl"/>
</dbReference>
<dbReference type="NCBIfam" id="TIGR00587">
    <property type="entry name" value="nfo"/>
    <property type="match status" value="1"/>
</dbReference>
<dbReference type="PANTHER" id="PTHR21445:SF0">
    <property type="entry name" value="APURINIC-APYRIMIDINIC ENDONUCLEASE"/>
    <property type="match status" value="1"/>
</dbReference>
<dbReference type="PANTHER" id="PTHR21445">
    <property type="entry name" value="ENDONUCLEASE IV ENDODEOXYRIBONUCLEASE IV"/>
    <property type="match status" value="1"/>
</dbReference>
<dbReference type="Pfam" id="PF01261">
    <property type="entry name" value="AP_endonuc_2"/>
    <property type="match status" value="1"/>
</dbReference>
<dbReference type="SMART" id="SM00518">
    <property type="entry name" value="AP2Ec"/>
    <property type="match status" value="1"/>
</dbReference>
<dbReference type="SUPFAM" id="SSF51658">
    <property type="entry name" value="Xylose isomerase-like"/>
    <property type="match status" value="1"/>
</dbReference>
<dbReference type="PROSITE" id="PS00730">
    <property type="entry name" value="AP_NUCLEASE_F2_2"/>
    <property type="match status" value="1"/>
</dbReference>
<dbReference type="PROSITE" id="PS00731">
    <property type="entry name" value="AP_NUCLEASE_F2_3"/>
    <property type="match status" value="1"/>
</dbReference>
<dbReference type="PROSITE" id="PS51432">
    <property type="entry name" value="AP_NUCLEASE_F2_4"/>
    <property type="match status" value="1"/>
</dbReference>
<organism>
    <name type="scientific">Alkaliphilus oremlandii (strain OhILAs)</name>
    <name type="common">Clostridium oremlandii (strain OhILAs)</name>
    <dbReference type="NCBI Taxonomy" id="350688"/>
    <lineage>
        <taxon>Bacteria</taxon>
        <taxon>Bacillati</taxon>
        <taxon>Bacillota</taxon>
        <taxon>Clostridia</taxon>
        <taxon>Peptostreptococcales</taxon>
        <taxon>Natronincolaceae</taxon>
        <taxon>Alkaliphilus</taxon>
    </lineage>
</organism>
<protein>
    <recommendedName>
        <fullName evidence="1">Probable endonuclease 4</fullName>
        <ecNumber evidence="1">3.1.21.2</ecNumber>
    </recommendedName>
    <alternativeName>
        <fullName evidence="1">Endodeoxyribonuclease IV</fullName>
    </alternativeName>
    <alternativeName>
        <fullName evidence="1">Endonuclease IV</fullName>
    </alternativeName>
</protein>
<accession>A8ML82</accession>
<feature type="chain" id="PRO_1000058172" description="Probable endonuclease 4">
    <location>
        <begin position="1"/>
        <end position="281"/>
    </location>
</feature>
<feature type="binding site" evidence="1">
    <location>
        <position position="67"/>
    </location>
    <ligand>
        <name>Zn(2+)</name>
        <dbReference type="ChEBI" id="CHEBI:29105"/>
        <label>1</label>
    </ligand>
</feature>
<feature type="binding site" evidence="1">
    <location>
        <position position="107"/>
    </location>
    <ligand>
        <name>Zn(2+)</name>
        <dbReference type="ChEBI" id="CHEBI:29105"/>
        <label>1</label>
    </ligand>
</feature>
<feature type="binding site" evidence="1">
    <location>
        <position position="142"/>
    </location>
    <ligand>
        <name>Zn(2+)</name>
        <dbReference type="ChEBI" id="CHEBI:29105"/>
        <label>1</label>
    </ligand>
</feature>
<feature type="binding site" evidence="1">
    <location>
        <position position="142"/>
    </location>
    <ligand>
        <name>Zn(2+)</name>
        <dbReference type="ChEBI" id="CHEBI:29105"/>
        <label>2</label>
    </ligand>
</feature>
<feature type="binding site" evidence="1">
    <location>
        <position position="176"/>
    </location>
    <ligand>
        <name>Zn(2+)</name>
        <dbReference type="ChEBI" id="CHEBI:29105"/>
        <label>2</label>
    </ligand>
</feature>
<feature type="binding site" evidence="1">
    <location>
        <position position="179"/>
    </location>
    <ligand>
        <name>Zn(2+)</name>
        <dbReference type="ChEBI" id="CHEBI:29105"/>
        <label>3</label>
    </ligand>
</feature>
<feature type="binding site" evidence="1">
    <location>
        <position position="211"/>
    </location>
    <ligand>
        <name>Zn(2+)</name>
        <dbReference type="ChEBI" id="CHEBI:29105"/>
        <label>2</label>
    </ligand>
</feature>
<feature type="binding site" evidence="1">
    <location>
        <position position="224"/>
    </location>
    <ligand>
        <name>Zn(2+)</name>
        <dbReference type="ChEBI" id="CHEBI:29105"/>
        <label>3</label>
    </ligand>
</feature>
<feature type="binding site" evidence="1">
    <location>
        <position position="226"/>
    </location>
    <ligand>
        <name>Zn(2+)</name>
        <dbReference type="ChEBI" id="CHEBI:29105"/>
        <label>3</label>
    </ligand>
</feature>
<feature type="binding site" evidence="1">
    <location>
        <position position="256"/>
    </location>
    <ligand>
        <name>Zn(2+)</name>
        <dbReference type="ChEBI" id="CHEBI:29105"/>
        <label>2</label>
    </ligand>
</feature>
<comment type="function">
    <text evidence="1">Endonuclease IV plays a role in DNA repair. It cleaves phosphodiester bonds at apurinic or apyrimidinic (AP) sites, generating a 3'-hydroxyl group and a 5'-terminal sugar phosphate.</text>
</comment>
<comment type="catalytic activity">
    <reaction evidence="1">
        <text>Endonucleolytic cleavage to 5'-phosphooligonucleotide end-products.</text>
        <dbReference type="EC" id="3.1.21.2"/>
    </reaction>
</comment>
<comment type="cofactor">
    <cofactor evidence="1">
        <name>Zn(2+)</name>
        <dbReference type="ChEBI" id="CHEBI:29105"/>
    </cofactor>
    <text evidence="1">Binds 3 Zn(2+) ions.</text>
</comment>
<comment type="similarity">
    <text evidence="1">Belongs to the AP endonuclease 2 family.</text>
</comment>
<name>END4_ALKOO</name>
<keyword id="KW-0227">DNA damage</keyword>
<keyword id="KW-0234">DNA repair</keyword>
<keyword id="KW-0255">Endonuclease</keyword>
<keyword id="KW-0378">Hydrolase</keyword>
<keyword id="KW-0479">Metal-binding</keyword>
<keyword id="KW-0540">Nuclease</keyword>
<keyword id="KW-1185">Reference proteome</keyword>
<keyword id="KW-0862">Zinc</keyword>
<evidence type="ECO:0000255" key="1">
    <source>
        <dbReference type="HAMAP-Rule" id="MF_00152"/>
    </source>
</evidence>
<reference key="1">
    <citation type="submission" date="2007-10" db="EMBL/GenBank/DDBJ databases">
        <title>Complete genome of Alkaliphilus oremlandii OhILAs.</title>
        <authorList>
            <person name="Copeland A."/>
            <person name="Lucas S."/>
            <person name="Lapidus A."/>
            <person name="Barry K."/>
            <person name="Detter J.C."/>
            <person name="Glavina del Rio T."/>
            <person name="Hammon N."/>
            <person name="Israni S."/>
            <person name="Dalin E."/>
            <person name="Tice H."/>
            <person name="Pitluck S."/>
            <person name="Chain P."/>
            <person name="Malfatti S."/>
            <person name="Shin M."/>
            <person name="Vergez L."/>
            <person name="Schmutz J."/>
            <person name="Larimer F."/>
            <person name="Land M."/>
            <person name="Hauser L."/>
            <person name="Kyrpides N."/>
            <person name="Mikhailova N."/>
            <person name="Stolz J.F."/>
            <person name="Dawson A."/>
            <person name="Fisher E."/>
            <person name="Crable B."/>
            <person name="Perera E."/>
            <person name="Lisak J."/>
            <person name="Ranganathan M."/>
            <person name="Basu P."/>
            <person name="Richardson P."/>
        </authorList>
    </citation>
    <scope>NUCLEOTIDE SEQUENCE [LARGE SCALE GENOMIC DNA]</scope>
    <source>
        <strain>OhILAs</strain>
    </source>
</reference>
<sequence length="281" mass="31698">MLNIGCHLSSSKGYKAMGKDAISINANTFQFFTRNPRGSKAKAMDLKDVEGLLQLMEENKFAKILAHAPYTLNPCSADERTREFAMEVLVDDLARMEYLPNNFYNFHPGNHLKQGVEVGIEYIVNSLNDVLKPDQTTTVLLETMSGKGTEIGKNFEELKQIIDGIKLSNKVGVCLDTCHVYDAGYDIVQDLDGVIQEFDRIIGLDKLYAIHLNDSKNPFASHKDRHAKIGEGYIGEEGIVRIINHPKLRHLPFFLETPNDLEGHGEEIKMLREAYRDESIL</sequence>
<gene>
    <name evidence="1" type="primary">nfo</name>
    <name type="ordered locus">Clos_0337</name>
</gene>
<proteinExistence type="inferred from homology"/>